<reference key="1">
    <citation type="submission" date="2007-10" db="EMBL/GenBank/DDBJ databases">
        <title>Complete sequence of chromosome 1 of Burkholderia multivorans ATCC 17616.</title>
        <authorList>
            <person name="Copeland A."/>
            <person name="Lucas S."/>
            <person name="Lapidus A."/>
            <person name="Barry K."/>
            <person name="Glavina del Rio T."/>
            <person name="Dalin E."/>
            <person name="Tice H."/>
            <person name="Pitluck S."/>
            <person name="Chain P."/>
            <person name="Malfatti S."/>
            <person name="Shin M."/>
            <person name="Vergez L."/>
            <person name="Schmutz J."/>
            <person name="Larimer F."/>
            <person name="Land M."/>
            <person name="Hauser L."/>
            <person name="Kyrpides N."/>
            <person name="Kim E."/>
            <person name="Tiedje J."/>
            <person name="Richardson P."/>
        </authorList>
    </citation>
    <scope>NUCLEOTIDE SEQUENCE [LARGE SCALE GENOMIC DNA]</scope>
    <source>
        <strain>ATCC 17616 / 249</strain>
    </source>
</reference>
<reference key="2">
    <citation type="submission" date="2007-04" db="EMBL/GenBank/DDBJ databases">
        <title>Complete genome sequence of Burkholderia multivorans ATCC 17616.</title>
        <authorList>
            <person name="Ohtsubo Y."/>
            <person name="Yamashita A."/>
            <person name="Kurokawa K."/>
            <person name="Takami H."/>
            <person name="Yuhara S."/>
            <person name="Nishiyama E."/>
            <person name="Endo R."/>
            <person name="Miyazaki R."/>
            <person name="Ono A."/>
            <person name="Yano K."/>
            <person name="Ito M."/>
            <person name="Sota M."/>
            <person name="Yuji N."/>
            <person name="Hattori M."/>
            <person name="Tsuda M."/>
        </authorList>
    </citation>
    <scope>NUCLEOTIDE SEQUENCE [LARGE SCALE GENOMIC DNA]</scope>
    <source>
        <strain>ATCC 17616 / 249</strain>
    </source>
</reference>
<comment type="function">
    <text evidence="1">Specifically methylates the pseudouridine at position 1915 (m3Psi1915) in 23S rRNA.</text>
</comment>
<comment type="catalytic activity">
    <reaction evidence="1">
        <text>pseudouridine(1915) in 23S rRNA + S-adenosyl-L-methionine = N(3)-methylpseudouridine(1915) in 23S rRNA + S-adenosyl-L-homocysteine + H(+)</text>
        <dbReference type="Rhea" id="RHEA:42752"/>
        <dbReference type="Rhea" id="RHEA-COMP:10221"/>
        <dbReference type="Rhea" id="RHEA-COMP:10222"/>
        <dbReference type="ChEBI" id="CHEBI:15378"/>
        <dbReference type="ChEBI" id="CHEBI:57856"/>
        <dbReference type="ChEBI" id="CHEBI:59789"/>
        <dbReference type="ChEBI" id="CHEBI:65314"/>
        <dbReference type="ChEBI" id="CHEBI:74486"/>
        <dbReference type="EC" id="2.1.1.177"/>
    </reaction>
</comment>
<comment type="subunit">
    <text evidence="1">Homodimer.</text>
</comment>
<comment type="subcellular location">
    <subcellularLocation>
        <location evidence="1">Cytoplasm</location>
    </subcellularLocation>
</comment>
<comment type="similarity">
    <text evidence="1">Belongs to the RNA methyltransferase RlmH family.</text>
</comment>
<protein>
    <recommendedName>
        <fullName evidence="1">Ribosomal RNA large subunit methyltransferase H</fullName>
        <ecNumber evidence="1">2.1.1.177</ecNumber>
    </recommendedName>
    <alternativeName>
        <fullName evidence="1">23S rRNA (pseudouridine1915-N3)-methyltransferase</fullName>
    </alternativeName>
    <alternativeName>
        <fullName evidence="1">23S rRNA m3Psi1915 methyltransferase</fullName>
    </alternativeName>
    <alternativeName>
        <fullName evidence="1">rRNA (pseudouridine-N3-)-methyltransferase RlmH</fullName>
    </alternativeName>
</protein>
<organism>
    <name type="scientific">Burkholderia multivorans (strain ATCC 17616 / 249)</name>
    <dbReference type="NCBI Taxonomy" id="395019"/>
    <lineage>
        <taxon>Bacteria</taxon>
        <taxon>Pseudomonadati</taxon>
        <taxon>Pseudomonadota</taxon>
        <taxon>Betaproteobacteria</taxon>
        <taxon>Burkholderiales</taxon>
        <taxon>Burkholderiaceae</taxon>
        <taxon>Burkholderia</taxon>
        <taxon>Burkholderia cepacia complex</taxon>
    </lineage>
</organism>
<sequence>MKLFILAVGHKMPGWIASGFDEYAKRMPPELRIELREIKPELRSGGRSAESVMAAERQKIDAALPKGARIVALDERGRDWTTMQLAQALPGWQQDGRDVAFVIGGADGLDPELKARADLLLRISSMTLPHGMVRVLLAEQLYRAWSITQNHPYHRA</sequence>
<keyword id="KW-0963">Cytoplasm</keyword>
<keyword id="KW-0489">Methyltransferase</keyword>
<keyword id="KW-1185">Reference proteome</keyword>
<keyword id="KW-0698">rRNA processing</keyword>
<keyword id="KW-0949">S-adenosyl-L-methionine</keyword>
<keyword id="KW-0808">Transferase</keyword>
<accession>A9AJJ5</accession>
<feature type="chain" id="PRO_0000366572" description="Ribosomal RNA large subunit methyltransferase H">
    <location>
        <begin position="1"/>
        <end position="156"/>
    </location>
</feature>
<feature type="binding site" evidence="1">
    <location>
        <position position="73"/>
    </location>
    <ligand>
        <name>S-adenosyl-L-methionine</name>
        <dbReference type="ChEBI" id="CHEBI:59789"/>
    </ligand>
</feature>
<feature type="binding site" evidence="1">
    <location>
        <position position="104"/>
    </location>
    <ligand>
        <name>S-adenosyl-L-methionine</name>
        <dbReference type="ChEBI" id="CHEBI:59789"/>
    </ligand>
</feature>
<feature type="binding site" evidence="1">
    <location>
        <begin position="123"/>
        <end position="128"/>
    </location>
    <ligand>
        <name>S-adenosyl-L-methionine</name>
        <dbReference type="ChEBI" id="CHEBI:59789"/>
    </ligand>
</feature>
<proteinExistence type="inferred from homology"/>
<evidence type="ECO:0000255" key="1">
    <source>
        <dbReference type="HAMAP-Rule" id="MF_00658"/>
    </source>
</evidence>
<dbReference type="EC" id="2.1.1.177" evidence="1"/>
<dbReference type="EMBL" id="CP000868">
    <property type="protein sequence ID" value="ABX14670.1"/>
    <property type="molecule type" value="Genomic_DNA"/>
</dbReference>
<dbReference type="EMBL" id="AP009385">
    <property type="protein sequence ID" value="BAG44180.1"/>
    <property type="molecule type" value="Genomic_DNA"/>
</dbReference>
<dbReference type="RefSeq" id="WP_006415290.1">
    <property type="nucleotide sequence ID" value="NC_010804.1"/>
</dbReference>
<dbReference type="SMR" id="A9AJJ5"/>
<dbReference type="STRING" id="395019.BMULJ_02285"/>
<dbReference type="GeneID" id="89570830"/>
<dbReference type="KEGG" id="bmj:BMULJ_02285"/>
<dbReference type="KEGG" id="bmu:Bmul_0979"/>
<dbReference type="eggNOG" id="COG1576">
    <property type="taxonomic scope" value="Bacteria"/>
</dbReference>
<dbReference type="HOGENOM" id="CLU_100552_1_0_4"/>
<dbReference type="Proteomes" id="UP000008815">
    <property type="component" value="Chromosome 1"/>
</dbReference>
<dbReference type="GO" id="GO:0005737">
    <property type="term" value="C:cytoplasm"/>
    <property type="evidence" value="ECO:0007669"/>
    <property type="project" value="UniProtKB-SubCell"/>
</dbReference>
<dbReference type="GO" id="GO:0070038">
    <property type="term" value="F:rRNA (pseudouridine-N3-)-methyltransferase activity"/>
    <property type="evidence" value="ECO:0007669"/>
    <property type="project" value="UniProtKB-UniRule"/>
</dbReference>
<dbReference type="CDD" id="cd18081">
    <property type="entry name" value="RlmH-like"/>
    <property type="match status" value="1"/>
</dbReference>
<dbReference type="Gene3D" id="3.40.1280.10">
    <property type="match status" value="1"/>
</dbReference>
<dbReference type="HAMAP" id="MF_00658">
    <property type="entry name" value="23SrRNA_methyltr_H"/>
    <property type="match status" value="1"/>
</dbReference>
<dbReference type="InterPro" id="IPR029028">
    <property type="entry name" value="Alpha/beta_knot_MTases"/>
</dbReference>
<dbReference type="InterPro" id="IPR003742">
    <property type="entry name" value="RlmH-like"/>
</dbReference>
<dbReference type="InterPro" id="IPR029026">
    <property type="entry name" value="tRNA_m1G_MTases_N"/>
</dbReference>
<dbReference type="NCBIfam" id="NF000986">
    <property type="entry name" value="PRK00103.1-4"/>
    <property type="match status" value="1"/>
</dbReference>
<dbReference type="NCBIfam" id="TIGR00246">
    <property type="entry name" value="tRNA_RlmH_YbeA"/>
    <property type="match status" value="1"/>
</dbReference>
<dbReference type="PANTHER" id="PTHR33603">
    <property type="entry name" value="METHYLTRANSFERASE"/>
    <property type="match status" value="1"/>
</dbReference>
<dbReference type="PANTHER" id="PTHR33603:SF1">
    <property type="entry name" value="RIBOSOMAL RNA LARGE SUBUNIT METHYLTRANSFERASE H"/>
    <property type="match status" value="1"/>
</dbReference>
<dbReference type="Pfam" id="PF02590">
    <property type="entry name" value="SPOUT_MTase"/>
    <property type="match status" value="1"/>
</dbReference>
<dbReference type="PIRSF" id="PIRSF004505">
    <property type="entry name" value="MT_bac"/>
    <property type="match status" value="1"/>
</dbReference>
<dbReference type="SUPFAM" id="SSF75217">
    <property type="entry name" value="alpha/beta knot"/>
    <property type="match status" value="1"/>
</dbReference>
<gene>
    <name evidence="1" type="primary">rlmH</name>
    <name type="ordered locus">Bmul_0979</name>
    <name type="ordered locus">BMULJ_02285</name>
</gene>
<name>RLMH_BURM1</name>